<dbReference type="EC" id="4.1.1.23" evidence="1"/>
<dbReference type="EMBL" id="CP000509">
    <property type="protein sequence ID" value="ABL81938.1"/>
    <property type="molecule type" value="Genomic_DNA"/>
</dbReference>
<dbReference type="RefSeq" id="WP_011755879.1">
    <property type="nucleotide sequence ID" value="NC_008699.1"/>
</dbReference>
<dbReference type="SMR" id="A1SJF3"/>
<dbReference type="STRING" id="196162.Noca_2433"/>
<dbReference type="KEGG" id="nca:Noca_2433"/>
<dbReference type="eggNOG" id="COG0284">
    <property type="taxonomic scope" value="Bacteria"/>
</dbReference>
<dbReference type="HOGENOM" id="CLU_060704_0_0_11"/>
<dbReference type="OrthoDB" id="9808470at2"/>
<dbReference type="UniPathway" id="UPA00070">
    <property type="reaction ID" value="UER00120"/>
</dbReference>
<dbReference type="Proteomes" id="UP000000640">
    <property type="component" value="Chromosome"/>
</dbReference>
<dbReference type="GO" id="GO:0004590">
    <property type="term" value="F:orotidine-5'-phosphate decarboxylase activity"/>
    <property type="evidence" value="ECO:0007669"/>
    <property type="project" value="UniProtKB-UniRule"/>
</dbReference>
<dbReference type="GO" id="GO:0006207">
    <property type="term" value="P:'de novo' pyrimidine nucleobase biosynthetic process"/>
    <property type="evidence" value="ECO:0007669"/>
    <property type="project" value="InterPro"/>
</dbReference>
<dbReference type="GO" id="GO:0044205">
    <property type="term" value="P:'de novo' UMP biosynthetic process"/>
    <property type="evidence" value="ECO:0007669"/>
    <property type="project" value="UniProtKB-UniRule"/>
</dbReference>
<dbReference type="CDD" id="cd04725">
    <property type="entry name" value="OMP_decarboxylase_like"/>
    <property type="match status" value="1"/>
</dbReference>
<dbReference type="Gene3D" id="3.20.20.70">
    <property type="entry name" value="Aldolase class I"/>
    <property type="match status" value="1"/>
</dbReference>
<dbReference type="HAMAP" id="MF_01215">
    <property type="entry name" value="OMPdecase_type2"/>
    <property type="match status" value="1"/>
</dbReference>
<dbReference type="InterPro" id="IPR013785">
    <property type="entry name" value="Aldolase_TIM"/>
</dbReference>
<dbReference type="InterPro" id="IPR011995">
    <property type="entry name" value="OMPdecase_type-2"/>
</dbReference>
<dbReference type="InterPro" id="IPR001754">
    <property type="entry name" value="OMPdeCOase_dom"/>
</dbReference>
<dbReference type="InterPro" id="IPR011060">
    <property type="entry name" value="RibuloseP-bd_barrel"/>
</dbReference>
<dbReference type="NCBIfam" id="TIGR02127">
    <property type="entry name" value="pyrF_sub2"/>
    <property type="match status" value="1"/>
</dbReference>
<dbReference type="PANTHER" id="PTHR43375">
    <property type="entry name" value="OROTIDINE 5'-PHOSPHATE DECARBOXYLASE"/>
    <property type="match status" value="1"/>
</dbReference>
<dbReference type="PANTHER" id="PTHR43375:SF1">
    <property type="entry name" value="OROTIDINE 5'-PHOSPHATE DECARBOXYLASE"/>
    <property type="match status" value="1"/>
</dbReference>
<dbReference type="Pfam" id="PF00215">
    <property type="entry name" value="OMPdecase"/>
    <property type="match status" value="1"/>
</dbReference>
<dbReference type="SMART" id="SM00934">
    <property type="entry name" value="OMPdecase"/>
    <property type="match status" value="1"/>
</dbReference>
<dbReference type="SUPFAM" id="SSF51366">
    <property type="entry name" value="Ribulose-phoshate binding barrel"/>
    <property type="match status" value="1"/>
</dbReference>
<keyword id="KW-0210">Decarboxylase</keyword>
<keyword id="KW-0456">Lyase</keyword>
<keyword id="KW-0665">Pyrimidine biosynthesis</keyword>
<keyword id="KW-1185">Reference proteome</keyword>
<proteinExistence type="inferred from homology"/>
<evidence type="ECO:0000255" key="1">
    <source>
        <dbReference type="HAMAP-Rule" id="MF_01215"/>
    </source>
</evidence>
<gene>
    <name evidence="1" type="primary">pyrF</name>
    <name type="ordered locus">Noca_2433</name>
</gene>
<name>PYRF_NOCSJ</name>
<comment type="catalytic activity">
    <reaction evidence="1">
        <text>orotidine 5'-phosphate + H(+) = UMP + CO2</text>
        <dbReference type="Rhea" id="RHEA:11596"/>
        <dbReference type="ChEBI" id="CHEBI:15378"/>
        <dbReference type="ChEBI" id="CHEBI:16526"/>
        <dbReference type="ChEBI" id="CHEBI:57538"/>
        <dbReference type="ChEBI" id="CHEBI:57865"/>
        <dbReference type="EC" id="4.1.1.23"/>
    </reaction>
</comment>
<comment type="pathway">
    <text evidence="1">Pyrimidine metabolism; UMP biosynthesis via de novo pathway; UMP from orotate: step 2/2.</text>
</comment>
<comment type="similarity">
    <text evidence="1">Belongs to the OMP decarboxylase family. Type 2 subfamily.</text>
</comment>
<organism>
    <name type="scientific">Nocardioides sp. (strain ATCC BAA-499 / JS614)</name>
    <dbReference type="NCBI Taxonomy" id="196162"/>
    <lineage>
        <taxon>Bacteria</taxon>
        <taxon>Bacillati</taxon>
        <taxon>Actinomycetota</taxon>
        <taxon>Actinomycetes</taxon>
        <taxon>Propionibacteriales</taxon>
        <taxon>Nocardioidaceae</taxon>
        <taxon>Nocardioides</taxon>
    </lineage>
</organism>
<protein>
    <recommendedName>
        <fullName evidence="1">Orotidine 5'-phosphate decarboxylase</fullName>
        <ecNumber evidence="1">4.1.1.23</ecNumber>
    </recommendedName>
    <alternativeName>
        <fullName evidence="1">OMP decarboxylase</fullName>
        <shortName evidence="1">OMPDCase</shortName>
        <shortName evidence="1">OMPdecase</shortName>
    </alternativeName>
</protein>
<feature type="chain" id="PRO_1000213895" description="Orotidine 5'-phosphate decarboxylase">
    <location>
        <begin position="1"/>
        <end position="273"/>
    </location>
</feature>
<feature type="active site" description="Proton donor" evidence="1">
    <location>
        <position position="96"/>
    </location>
</feature>
<sequence length="273" mass="28231">MIPFGSRLHAAIADRGPLCVGIDPHAGLLSDWGLGDDVAGLETFALEVVEAIAPYVSVVKPQSAFFERFGSRGIAVLERVIAQSRAAGALVLLDVKRGDIGSTSQAYADAYLDPTSPLASDAITVSPFLGFGSLDPIVETARTHGAGLFVLALTSNKEGPEVQHARVDGVAGGGTVAGLMLDHLRRLNAEASPLGSFGAVVGATIGSTDEDLAFNGPVLAPGFGAQGGTIADVRRLFGAAAAVLPSSSRDVLRLQDPDVMRDFVVRTNDELRS</sequence>
<reference key="1">
    <citation type="submission" date="2006-12" db="EMBL/GenBank/DDBJ databases">
        <title>Complete sequence of chromosome 1 of Nocardioides sp. JS614.</title>
        <authorList>
            <person name="Copeland A."/>
            <person name="Lucas S."/>
            <person name="Lapidus A."/>
            <person name="Barry K."/>
            <person name="Detter J.C."/>
            <person name="Glavina del Rio T."/>
            <person name="Hammon N."/>
            <person name="Israni S."/>
            <person name="Dalin E."/>
            <person name="Tice H."/>
            <person name="Pitluck S."/>
            <person name="Thompson L.S."/>
            <person name="Brettin T."/>
            <person name="Bruce D."/>
            <person name="Han C."/>
            <person name="Tapia R."/>
            <person name="Schmutz J."/>
            <person name="Larimer F."/>
            <person name="Land M."/>
            <person name="Hauser L."/>
            <person name="Kyrpides N."/>
            <person name="Kim E."/>
            <person name="Mattes T."/>
            <person name="Gossett J."/>
            <person name="Richardson P."/>
        </authorList>
    </citation>
    <scope>NUCLEOTIDE SEQUENCE [LARGE SCALE GENOMIC DNA]</scope>
    <source>
        <strain>ATCC BAA-499 / JS614</strain>
    </source>
</reference>
<accession>A1SJF3</accession>